<organism>
    <name type="scientific">Homo sapiens</name>
    <name type="common">Human</name>
    <dbReference type="NCBI Taxonomy" id="9606"/>
    <lineage>
        <taxon>Eukaryota</taxon>
        <taxon>Metazoa</taxon>
        <taxon>Chordata</taxon>
        <taxon>Craniata</taxon>
        <taxon>Vertebrata</taxon>
        <taxon>Euteleostomi</taxon>
        <taxon>Mammalia</taxon>
        <taxon>Eutheria</taxon>
        <taxon>Euarchontoglires</taxon>
        <taxon>Primates</taxon>
        <taxon>Haplorrhini</taxon>
        <taxon>Catarrhini</taxon>
        <taxon>Hominidae</taxon>
        <taxon>Homo</taxon>
    </lineage>
</organism>
<evidence type="ECO:0000255" key="1"/>
<evidence type="ECO:0000269" key="2">
    <source>
    </source>
</evidence>
<evidence type="ECO:0000269" key="3">
    <source>
    </source>
</evidence>
<evidence type="ECO:0000269" key="4">
    <source>
    </source>
</evidence>
<evidence type="ECO:0000303" key="5">
    <source>
    </source>
</evidence>
<evidence type="ECO:0000303" key="6">
    <source>
    </source>
</evidence>
<evidence type="ECO:0000305" key="7"/>
<evidence type="ECO:0000305" key="8">
    <source>
    </source>
</evidence>
<evidence type="ECO:0007744" key="9">
    <source>
        <dbReference type="PDB" id="6APJ"/>
    </source>
</evidence>
<evidence type="ECO:0007744" key="10">
    <source>
        <dbReference type="PDB" id="6APL"/>
    </source>
</evidence>
<evidence type="ECO:0007829" key="11">
    <source>
        <dbReference type="PDB" id="6APJ"/>
    </source>
</evidence>
<evidence type="ECO:0007829" key="12">
    <source>
        <dbReference type="PDB" id="6APL"/>
    </source>
</evidence>
<feature type="chain" id="PRO_0000149272" description="Alpha-N-acetylgalactosaminide alpha-2,6-sialyltransferase 2">
    <location>
        <begin position="1"/>
        <end position="374"/>
    </location>
</feature>
<feature type="topological domain" description="Cytoplasmic" evidence="1">
    <location>
        <begin position="1"/>
        <end position="7"/>
    </location>
</feature>
<feature type="transmembrane region" description="Helical; Signal-anchor for type II membrane protein" evidence="1">
    <location>
        <begin position="8"/>
        <end position="28"/>
    </location>
</feature>
<feature type="topological domain" description="Lumenal" evidence="1">
    <location>
        <begin position="29"/>
        <end position="374"/>
    </location>
</feature>
<feature type="binding site" evidence="4 10">
    <location>
        <position position="156"/>
    </location>
    <ligand>
        <name>CMP-N-acetyl-beta-neuraminate</name>
        <dbReference type="ChEBI" id="CHEBI:57812"/>
    </ligand>
</feature>
<feature type="binding site" evidence="4 10">
    <location>
        <position position="179"/>
    </location>
    <ligand>
        <name>CMP-N-acetyl-beta-neuraminate</name>
        <dbReference type="ChEBI" id="CHEBI:57812"/>
    </ligand>
</feature>
<feature type="binding site" evidence="4 10">
    <location>
        <position position="304"/>
    </location>
    <ligand>
        <name>CMP-N-acetyl-beta-neuraminate</name>
        <dbReference type="ChEBI" id="CHEBI:57812"/>
    </ligand>
</feature>
<feature type="binding site" evidence="4 10">
    <location>
        <position position="336"/>
    </location>
    <ligand>
        <name>CMP-N-acetyl-beta-neuraminate</name>
        <dbReference type="ChEBI" id="CHEBI:57812"/>
    </ligand>
</feature>
<feature type="glycosylation site" description="N-linked (GlcNAc...) asparagine" evidence="4 10">
    <location>
        <position position="85"/>
    </location>
</feature>
<feature type="glycosylation site" description="N-linked (GlcNAc...) asparagine" evidence="4 10">
    <location>
        <position position="130"/>
    </location>
</feature>
<feature type="glycosylation site" description="N-linked (GlcNAc...) asparagine" evidence="4 10">
    <location>
        <position position="161"/>
    </location>
</feature>
<feature type="disulfide bond" evidence="4 9 10">
    <location>
        <begin position="66"/>
        <end position="148"/>
    </location>
</feature>
<feature type="disulfide bond" evidence="4 9 10">
    <location>
        <begin position="151"/>
        <end position="317"/>
    </location>
</feature>
<feature type="sequence conflict" description="In Ref. 2; AAA52228." evidence="7" ref="2">
    <original>L</original>
    <variation>V</variation>
    <location>
        <position position="11"/>
    </location>
</feature>
<feature type="helix" evidence="12">
    <location>
        <begin position="70"/>
        <end position="76"/>
    </location>
</feature>
<feature type="helix" evidence="12">
    <location>
        <begin position="78"/>
        <end position="81"/>
    </location>
</feature>
<feature type="helix" evidence="12">
    <location>
        <begin position="94"/>
        <end position="96"/>
    </location>
</feature>
<feature type="helix" evidence="12">
    <location>
        <begin position="99"/>
        <end position="105"/>
    </location>
</feature>
<feature type="helix" evidence="12">
    <location>
        <begin position="110"/>
        <end position="112"/>
    </location>
</feature>
<feature type="helix" evidence="12">
    <location>
        <begin position="119"/>
        <end position="128"/>
    </location>
</feature>
<feature type="helix" evidence="12">
    <location>
        <begin position="132"/>
        <end position="135"/>
    </location>
</feature>
<feature type="strand" evidence="12">
    <location>
        <begin position="150"/>
        <end position="154"/>
    </location>
</feature>
<feature type="helix" evidence="12">
    <location>
        <begin position="158"/>
        <end position="160"/>
    </location>
</feature>
<feature type="turn" evidence="12">
    <location>
        <begin position="161"/>
        <end position="163"/>
    </location>
</feature>
<feature type="helix" evidence="12">
    <location>
        <begin position="166"/>
        <end position="171"/>
    </location>
</feature>
<feature type="strand" evidence="12">
    <location>
        <begin position="172"/>
        <end position="180"/>
    </location>
</feature>
<feature type="turn" evidence="12">
    <location>
        <begin position="184"/>
        <end position="186"/>
    </location>
</feature>
<feature type="helix" evidence="12">
    <location>
        <begin position="187"/>
        <end position="190"/>
    </location>
</feature>
<feature type="strand" evidence="12">
    <location>
        <begin position="195"/>
        <end position="199"/>
    </location>
</feature>
<feature type="helix" evidence="12">
    <location>
        <begin position="201"/>
        <end position="210"/>
    </location>
</feature>
<feature type="turn" evidence="12">
    <location>
        <begin position="212"/>
        <end position="215"/>
    </location>
</feature>
<feature type="strand" evidence="12">
    <location>
        <begin position="226"/>
        <end position="229"/>
    </location>
</feature>
<feature type="helix" evidence="12">
    <location>
        <begin position="234"/>
        <end position="245"/>
    </location>
</feature>
<feature type="turn" evidence="12">
    <location>
        <begin position="253"/>
        <end position="256"/>
    </location>
</feature>
<feature type="helix" evidence="12">
    <location>
        <begin position="259"/>
        <end position="263"/>
    </location>
</feature>
<feature type="turn" evidence="12">
    <location>
        <begin position="269"/>
        <end position="271"/>
    </location>
</feature>
<feature type="strand" evidence="12">
    <location>
        <begin position="272"/>
        <end position="275"/>
    </location>
</feature>
<feature type="helix" evidence="12">
    <location>
        <begin position="277"/>
        <end position="286"/>
    </location>
</feature>
<feature type="helix" evidence="12">
    <location>
        <begin position="305"/>
        <end position="316"/>
    </location>
</feature>
<feature type="strand" evidence="12">
    <location>
        <begin position="318"/>
        <end position="324"/>
    </location>
</feature>
<feature type="helix" evidence="12">
    <location>
        <begin position="328"/>
        <end position="332"/>
    </location>
</feature>
<feature type="strand" evidence="11">
    <location>
        <begin position="339"/>
        <end position="341"/>
    </location>
</feature>
<feature type="helix" evidence="12">
    <location>
        <begin position="353"/>
        <end position="365"/>
    </location>
</feature>
<dbReference type="EC" id="2.4.3.3" evidence="2 4"/>
<dbReference type="EMBL" id="AJ251053">
    <property type="protein sequence ID" value="CAB61434.1"/>
    <property type="molecule type" value="mRNA"/>
</dbReference>
<dbReference type="EMBL" id="U14550">
    <property type="protein sequence ID" value="AAA52228.1"/>
    <property type="molecule type" value="mRNA"/>
</dbReference>
<dbReference type="EMBL" id="BT019972">
    <property type="protein sequence ID" value="AAV38775.1"/>
    <property type="molecule type" value="mRNA"/>
</dbReference>
<dbReference type="EMBL" id="BC040455">
    <property type="protein sequence ID" value="AAH40455.1"/>
    <property type="molecule type" value="mRNA"/>
</dbReference>
<dbReference type="CCDS" id="CCDS11747.1"/>
<dbReference type="RefSeq" id="NP_006447.2">
    <property type="nucleotide sequence ID" value="NM_006456.3"/>
</dbReference>
<dbReference type="PDB" id="6APJ">
    <property type="method" value="X-ray"/>
    <property type="resolution" value="3.10 A"/>
    <property type="chains" value="A/B/C/D/E/F=1-374"/>
</dbReference>
<dbReference type="PDB" id="6APL">
    <property type="method" value="X-ray"/>
    <property type="resolution" value="2.35 A"/>
    <property type="chains" value="A/B/C/D/E/F=1-374"/>
</dbReference>
<dbReference type="PDBsum" id="6APJ"/>
<dbReference type="PDBsum" id="6APL"/>
<dbReference type="SMR" id="Q9UJ37"/>
<dbReference type="BioGRID" id="115856">
    <property type="interactions" value="4"/>
</dbReference>
<dbReference type="FunCoup" id="Q9UJ37">
    <property type="interactions" value="224"/>
</dbReference>
<dbReference type="IntAct" id="Q9UJ37">
    <property type="interactions" value="1"/>
</dbReference>
<dbReference type="MINT" id="Q9UJ37"/>
<dbReference type="STRING" id="9606.ENSP00000225276"/>
<dbReference type="CAZy" id="GT29">
    <property type="family name" value="Glycosyltransferase Family 29"/>
</dbReference>
<dbReference type="GlyCosmos" id="Q9UJ37">
    <property type="glycosylation" value="4 sites, 1 glycan"/>
</dbReference>
<dbReference type="GlyGen" id="Q9UJ37">
    <property type="glycosylation" value="4 sites, 1 N-linked glycan (1 site), 1 O-linked glycan (1 site)"/>
</dbReference>
<dbReference type="iPTMnet" id="Q9UJ37"/>
<dbReference type="PhosphoSitePlus" id="Q9UJ37"/>
<dbReference type="BioMuta" id="ST6GALNAC2"/>
<dbReference type="DMDM" id="21759448"/>
<dbReference type="MassIVE" id="Q9UJ37"/>
<dbReference type="PaxDb" id="9606-ENSP00000225276"/>
<dbReference type="PeptideAtlas" id="Q9UJ37"/>
<dbReference type="ProteomicsDB" id="84582"/>
<dbReference type="Antibodypedia" id="32441">
    <property type="antibodies" value="107 antibodies from 21 providers"/>
</dbReference>
<dbReference type="DNASU" id="10610"/>
<dbReference type="Ensembl" id="ENST00000225276.10">
    <property type="protein sequence ID" value="ENSP00000225276.4"/>
    <property type="gene ID" value="ENSG00000070731.11"/>
</dbReference>
<dbReference type="GeneID" id="10610"/>
<dbReference type="KEGG" id="hsa:10610"/>
<dbReference type="MANE-Select" id="ENST00000225276.10">
    <property type="protein sequence ID" value="ENSP00000225276.4"/>
    <property type="RefSeq nucleotide sequence ID" value="NM_006456.3"/>
    <property type="RefSeq protein sequence ID" value="NP_006447.2"/>
</dbReference>
<dbReference type="UCSC" id="uc002jsg.5">
    <property type="organism name" value="human"/>
</dbReference>
<dbReference type="AGR" id="HGNC:10867"/>
<dbReference type="CTD" id="10610"/>
<dbReference type="DisGeNET" id="10610"/>
<dbReference type="GeneCards" id="ST6GALNAC2"/>
<dbReference type="HGNC" id="HGNC:10867">
    <property type="gene designation" value="ST6GALNAC2"/>
</dbReference>
<dbReference type="HPA" id="ENSG00000070731">
    <property type="expression patterns" value="Tissue enhanced (choroid)"/>
</dbReference>
<dbReference type="MIM" id="610137">
    <property type="type" value="gene"/>
</dbReference>
<dbReference type="neXtProt" id="NX_Q9UJ37"/>
<dbReference type="OpenTargets" id="ENSG00000070731"/>
<dbReference type="PharmGKB" id="PA35769"/>
<dbReference type="VEuPathDB" id="HostDB:ENSG00000070731"/>
<dbReference type="eggNOG" id="KOG2692">
    <property type="taxonomic scope" value="Eukaryota"/>
</dbReference>
<dbReference type="GeneTree" id="ENSGT00940000160433"/>
<dbReference type="HOGENOM" id="CLU_032020_0_0_1"/>
<dbReference type="InParanoid" id="Q9UJ37"/>
<dbReference type="OMA" id="HWKRLCL"/>
<dbReference type="OrthoDB" id="10264956at2759"/>
<dbReference type="PAN-GO" id="Q9UJ37">
    <property type="GO annotations" value="2 GO annotations based on evolutionary models"/>
</dbReference>
<dbReference type="PhylomeDB" id="Q9UJ37"/>
<dbReference type="TreeFam" id="TF354325"/>
<dbReference type="BRENDA" id="2.4.99.3">
    <property type="organism ID" value="2681"/>
</dbReference>
<dbReference type="PathwayCommons" id="Q9UJ37"/>
<dbReference type="Reactome" id="R-HSA-4085001">
    <property type="pathway name" value="Sialic acid metabolism"/>
</dbReference>
<dbReference type="Reactome" id="R-HSA-9683673">
    <property type="pathway name" value="Maturation of protein 3a"/>
</dbReference>
<dbReference type="Reactome" id="R-HSA-9694548">
    <property type="pathway name" value="Maturation of spike protein"/>
</dbReference>
<dbReference type="Reactome" id="R-HSA-9694719">
    <property type="pathway name" value="Maturation of protein 3a"/>
</dbReference>
<dbReference type="Reactome" id="R-HSA-977068">
    <property type="pathway name" value="Termination of O-glycan biosynthesis"/>
</dbReference>
<dbReference type="SignaLink" id="Q9UJ37"/>
<dbReference type="UniPathway" id="UPA00378"/>
<dbReference type="BioGRID-ORCS" id="10610">
    <property type="hits" value="7 hits in 1137 CRISPR screens"/>
</dbReference>
<dbReference type="ChiTaRS" id="ST6GALNAC2">
    <property type="organism name" value="human"/>
</dbReference>
<dbReference type="GeneWiki" id="ST6GALNAC2"/>
<dbReference type="GenomeRNAi" id="10610"/>
<dbReference type="Pharos" id="Q9UJ37">
    <property type="development level" value="Tbio"/>
</dbReference>
<dbReference type="PRO" id="PR:Q9UJ37"/>
<dbReference type="Proteomes" id="UP000005640">
    <property type="component" value="Chromosome 17"/>
</dbReference>
<dbReference type="RNAct" id="Q9UJ37">
    <property type="molecule type" value="protein"/>
</dbReference>
<dbReference type="Bgee" id="ENSG00000070731">
    <property type="expression patterns" value="Expressed in tibial nerve and 100 other cell types or tissues"/>
</dbReference>
<dbReference type="ExpressionAtlas" id="Q9UJ37">
    <property type="expression patterns" value="baseline and differential"/>
</dbReference>
<dbReference type="GO" id="GO:0000139">
    <property type="term" value="C:Golgi membrane"/>
    <property type="evidence" value="ECO:0000304"/>
    <property type="project" value="Reactome"/>
</dbReference>
<dbReference type="GO" id="GO:0001665">
    <property type="term" value="F:alpha-N-acetylgalactosaminide alpha-2,6-sialyltransferase activity"/>
    <property type="evidence" value="ECO:0000314"/>
    <property type="project" value="UniProtKB"/>
</dbReference>
<dbReference type="GO" id="GO:0008373">
    <property type="term" value="F:sialyltransferase activity"/>
    <property type="evidence" value="ECO:0000304"/>
    <property type="project" value="Reactome"/>
</dbReference>
<dbReference type="GO" id="GO:0016266">
    <property type="term" value="P:O-glycan processing"/>
    <property type="evidence" value="ECO:0000304"/>
    <property type="project" value="Reactome"/>
</dbReference>
<dbReference type="GO" id="GO:0006486">
    <property type="term" value="P:protein glycosylation"/>
    <property type="evidence" value="ECO:0000314"/>
    <property type="project" value="UniProtKB"/>
</dbReference>
<dbReference type="GO" id="GO:0006493">
    <property type="term" value="P:protein O-linked glycosylation"/>
    <property type="evidence" value="ECO:0000314"/>
    <property type="project" value="UniProtKB"/>
</dbReference>
<dbReference type="GO" id="GO:1990743">
    <property type="term" value="P:protein sialylation"/>
    <property type="evidence" value="ECO:0000314"/>
    <property type="project" value="UniProtKB"/>
</dbReference>
<dbReference type="GO" id="GO:0019082">
    <property type="term" value="P:viral protein processing"/>
    <property type="evidence" value="ECO:0000304"/>
    <property type="project" value="Reactome"/>
</dbReference>
<dbReference type="CDD" id="cd23972">
    <property type="entry name" value="GT29_ST6GALNAC2"/>
    <property type="match status" value="1"/>
</dbReference>
<dbReference type="FunFam" id="3.90.1480.20:FF:000013">
    <property type="entry name" value="ST6 N-acetylgalactosaminide alpha-2,6-sialyltransferase 1"/>
    <property type="match status" value="1"/>
</dbReference>
<dbReference type="Gene3D" id="3.90.1480.20">
    <property type="entry name" value="Glycosyl transferase family 29"/>
    <property type="match status" value="1"/>
</dbReference>
<dbReference type="InterPro" id="IPR001675">
    <property type="entry name" value="Glyco_trans_29"/>
</dbReference>
<dbReference type="InterPro" id="IPR038578">
    <property type="entry name" value="GT29-like_sf"/>
</dbReference>
<dbReference type="InterPro" id="IPR012163">
    <property type="entry name" value="Sialyl_trans"/>
</dbReference>
<dbReference type="PANTHER" id="PTHR45941:SF5">
    <property type="entry name" value="ALPHA-N-ACETYLGALACTOSAMINIDE ALPHA-2,6-SIALYLTRANSFERASE 2"/>
    <property type="match status" value="1"/>
</dbReference>
<dbReference type="PANTHER" id="PTHR45941">
    <property type="entry name" value="ALPHA-N-ACETYLGALACTOSAMINIDE ALPHA-2,6-SIALYLTRANSFERASE 2-LIKE-RELATED"/>
    <property type="match status" value="1"/>
</dbReference>
<dbReference type="Pfam" id="PF00777">
    <property type="entry name" value="Glyco_transf_29"/>
    <property type="match status" value="1"/>
</dbReference>
<dbReference type="PIRSF" id="PIRSF005557">
    <property type="entry name" value="Sialyl_trans"/>
    <property type="match status" value="1"/>
</dbReference>
<proteinExistence type="evidence at protein level"/>
<reference key="1">
    <citation type="journal article" date="2000" name="Biochim. Biophys. Acta">
        <title>Molecular cloning and functional expression of human ST6GalNAc II. Molecular expression in various human cultured cells.</title>
        <authorList>
            <person name="Samyn-Petit B."/>
            <person name="Krzewinski-Recchi M.A."/>
            <person name="Steelant W.F.A."/>
            <person name="Delannoy P."/>
            <person name="Harduin-Lepers A."/>
        </authorList>
    </citation>
    <scope>NUCLEOTIDE SEQUENCE [MRNA]</scope>
    <scope>FUNCTION</scope>
    <scope>CATALYTIC ACTIVITY</scope>
    <scope>PATHWAY</scope>
    <scope>BIOPHYSICOCHEMICAL PROPERTIES</scope>
    <scope>TISSUE SPECIFICITY</scope>
</reference>
<reference key="2">
    <citation type="submission" date="1994-09" db="EMBL/GenBank/DDBJ databases">
        <title>Isolation and cloning from human mammary epithelial cells of a complete cDNA sequence homologous to other known sialyltransferases.</title>
        <authorList>
            <person name="Sotiropoulou G."/>
            <person name="Anisowicz A."/>
            <person name="Sager R."/>
        </authorList>
    </citation>
    <scope>NUCLEOTIDE SEQUENCE [MRNA]</scope>
    <source>
        <tissue>Mammary gland</tissue>
    </source>
</reference>
<reference key="3">
    <citation type="submission" date="2003-05" db="EMBL/GenBank/DDBJ databases">
        <title>Cloning of human full-length CDSs in BD Creator(TM) system donor vector.</title>
        <authorList>
            <person name="Kalnine N."/>
            <person name="Chen X."/>
            <person name="Rolfs A."/>
            <person name="Halleck A."/>
            <person name="Hines L."/>
            <person name="Eisenstein S."/>
            <person name="Koundinya M."/>
            <person name="Raphael J."/>
            <person name="Moreira D."/>
            <person name="Kelley T."/>
            <person name="LaBaer J."/>
            <person name="Lin Y."/>
            <person name="Phelan M."/>
            <person name="Farmer A."/>
        </authorList>
    </citation>
    <scope>NUCLEOTIDE SEQUENCE [LARGE SCALE MRNA]</scope>
</reference>
<reference key="4">
    <citation type="journal article" date="2004" name="Genome Res.">
        <title>The status, quality, and expansion of the NIH full-length cDNA project: the Mammalian Gene Collection (MGC).</title>
        <authorList>
            <consortium name="The MGC Project Team"/>
        </authorList>
    </citation>
    <scope>NUCLEOTIDE SEQUENCE [LARGE SCALE MRNA]</scope>
    <source>
        <tissue>Skin</tissue>
    </source>
</reference>
<reference key="5">
    <citation type="journal article" date="2004" name="Cancer Res.">
        <title>Role of the human ST6GalNAc-I and ST6GalNAc-II in the synthesis of the cancer-associated sialyl-Tn antigen.</title>
        <authorList>
            <person name="Marcos N.T."/>
            <person name="Pinho S."/>
            <person name="Grandela C."/>
            <person name="Cruz A."/>
            <person name="Samyn-Petit B."/>
            <person name="Harduin-Lepers A."/>
            <person name="Almeida R."/>
            <person name="Silva F."/>
            <person name="Morais V."/>
            <person name="Costa J."/>
            <person name="Kihlberg J."/>
            <person name="Clausen H."/>
            <person name="Reis C.A."/>
        </authorList>
    </citation>
    <scope>FUNCTION</scope>
    <scope>CATALYTIC ACTIVITY</scope>
    <scope>BIOPHYSICOCHEMICAL PROPERTIES</scope>
</reference>
<reference evidence="9 10" key="6">
    <citation type="journal article" date="2018" name="Nat. Chem. Biol.">
        <title>Expression system for structural and functional studies of human glycosylation enzymes.</title>
        <authorList>
            <person name="Moremen K.W."/>
            <person name="Ramiah A."/>
            <person name="Stuart M."/>
            <person name="Steel J."/>
            <person name="Meng L."/>
            <person name="Forouhar F."/>
            <person name="Moniz H.A."/>
            <person name="Gahlay G."/>
            <person name="Gao Z."/>
            <person name="Chapla D."/>
            <person name="Wang S."/>
            <person name="Yang J.Y."/>
            <person name="Prabhakar P.K."/>
            <person name="Johnson R."/>
            <person name="Rosa M.D."/>
            <person name="Geisler C."/>
            <person name="Nairn A.V."/>
            <person name="Seetharaman J."/>
            <person name="Wu S.C."/>
            <person name="Tong L."/>
            <person name="Gilbert H.J."/>
            <person name="LaBaer J."/>
            <person name="Jarvis D.L."/>
        </authorList>
    </citation>
    <scope>X-RAY CRYSTALLOGRAPHY (2.35 ANGSTROMS) IN COMPLEX WITH CMP</scope>
    <scope>FUNCTION</scope>
    <scope>CATALYTIC ACTIVITY</scope>
    <scope>PATHWAY</scope>
    <scope>BIOPHYSICOCHEMICAL PROPERTIES</scope>
    <scope>GLYCOSYLATION AT ASN-85; ASN-130 AND ASN-161</scope>
    <scope>DISULFIDE BONDS</scope>
</reference>
<reference key="7">
    <citation type="journal article" date="2009" name="Kidney Int.">
        <title>Interaction between variants of two glycosyltransferase genes in IgA nephropathy.</title>
        <authorList>
            <person name="Zhu L."/>
            <person name="Tang W."/>
            <person name="Li G."/>
            <person name="Lv J."/>
            <person name="Ding J."/>
            <person name="Yu L."/>
            <person name="Zhao M."/>
            <person name="Li Y."/>
            <person name="Zhang X."/>
            <person name="Shen Y."/>
            <person name="Zhang H."/>
            <person name="Wang H."/>
        </authorList>
    </citation>
    <scope>INVOLVEMENT IN IGA NEPHROPATHY</scope>
</reference>
<protein>
    <recommendedName>
        <fullName>Alpha-N-acetylgalactosaminide alpha-2,6-sialyltransferase 2</fullName>
        <ecNumber evidence="2 4">2.4.3.3</ecNumber>
    </recommendedName>
    <alternativeName>
        <fullName>GalNAc alpha-2,6-sialyltransferase II</fullName>
    </alternativeName>
    <alternativeName>
        <fullName evidence="5">ST6GalNAc II</fullName>
        <shortName evidence="6">ST6GalNAcII</shortName>
    </alternativeName>
    <alternativeName>
        <fullName>SThM</fullName>
    </alternativeName>
    <alternativeName>
        <fullName>Sialyltransferase 7B</fullName>
        <shortName>SIAT7-B</shortName>
    </alternativeName>
</protein>
<gene>
    <name type="primary">ST6GALNAC2</name>
    <name type="synonym">SIAT7B</name>
    <name type="synonym">SIATL1</name>
    <name type="synonym">STHM</name>
</gene>
<sequence length="374" mass="41939">MGLPRGSFFWLLLLLTAACSGLLFALYFSAVQRYPGPAAGARDTTSFEAFFQSKASNSWTGKGQACRHLLHLAIQRHPHFRGLFNLSIPVLLWGDLFTPALWDRLSQHKAPYGWRGLSHQVIASTLSLLNGSESAKLFAPPRDTPPKCIRCAVVGNGGILNGSRQGPNIDAHDYVFRLNGAVIKGFERDVGTKTSFYGFTVNTMKNSLVSYWNLGFTSVPQGQDLQYIFIPSDIRDYVMLRSAILGVPVPEGLDKGDRPHAYFGPEASASKFKLLHPDFISYLTERFLKSKLINTHFGDLYMPSTGALMLLTALHTCDQVSAYGFITSNYWKFSDHYFERKMKPLIFYANHDLSLEAALWRDLHKAGILQLYQR</sequence>
<name>SIA7B_HUMAN</name>
<comment type="function">
    <text evidence="2 3 4">Catalyzes the transfer of N-acetylneuraminyl groups onto glycan chains in glycoproteins (PubMed:10742600, PubMed:29251719). Conjugates sialic acid with an alpha-2-6 linkage to N-acetylgalactosamine (GalNAc) glycan chains linked to serine or threonine in glycoproteins. Sialylates alphaGalNAc- and Galbeta1-&gt;3GalNAc-O-Ser/Thr epitopes also known as Tn and T antigens.</text>
</comment>
<comment type="catalytic activity">
    <reaction evidence="2 4">
        <text>a beta-D-galactosyl-(1-&gt;3)-N-acetyl-alpha-D-galactosaminyl derivative + CMP-N-acetyl-beta-neuraminate = a beta-D-galactosyl-(1-&gt;3)-[N-acetyl-alpha-neuraminyl-(2-&gt;6)]-N-acetyl-alpha-D-galactosaminyl derivative + CMP + H(+)</text>
        <dbReference type="Rhea" id="RHEA:11136"/>
        <dbReference type="ChEBI" id="CHEBI:15378"/>
        <dbReference type="ChEBI" id="CHEBI:57812"/>
        <dbReference type="ChEBI" id="CHEBI:60377"/>
        <dbReference type="ChEBI" id="CHEBI:133470"/>
        <dbReference type="ChEBI" id="CHEBI:140764"/>
        <dbReference type="EC" id="2.4.3.3"/>
    </reaction>
    <physiologicalReaction direction="left-to-right" evidence="2 4">
        <dbReference type="Rhea" id="RHEA:11137"/>
    </physiologicalReaction>
</comment>
<comment type="catalytic activity">
    <reaction evidence="3">
        <text>a 3-O-[N-acetyl-alpha-D-galactosaminyl]-L-threonyl-[protein] + CMP-N-acetyl-beta-neuraminate = a 3-O-[N-acetyl-alpha-neuraminosyl-(2-&gt;6)-N-acetyl-alpha-D-galactosaminyl]-L-threonyl-[protein] + CMP + H(+)</text>
        <dbReference type="Rhea" id="RHEA:81643"/>
        <dbReference type="Rhea" id="RHEA-COMP:11689"/>
        <dbReference type="Rhea" id="RHEA-COMP:19720"/>
        <dbReference type="ChEBI" id="CHEBI:15378"/>
        <dbReference type="ChEBI" id="CHEBI:57812"/>
        <dbReference type="ChEBI" id="CHEBI:60377"/>
        <dbReference type="ChEBI" id="CHEBI:87075"/>
        <dbReference type="ChEBI" id="CHEBI:231970"/>
    </reaction>
    <physiologicalReaction direction="left-to-right" evidence="8">
        <dbReference type="Rhea" id="RHEA:81644"/>
    </physiologicalReaction>
</comment>
<comment type="catalytic activity">
    <reaction evidence="3">
        <text>a 3-O-[N-acetyl-alpha-neuraminyl-(2-&gt;3)-beta-D-galactosyl-(1-&gt;3)-N-acetyl-alpha-D-galactosaminyl]-L-threonyl-[protein] + CMP-N-acetyl-beta-neuraminate = a 3-O-{alpha-Neu5Ac-(2-&gt;3)-beta-D-Gal-(1-&gt;3)-[alpha-Neu5Ac-(2-&gt;6)]-alpha-D-GalNAc}-L-threonyl-[protein] + CMP + H(+)</text>
        <dbReference type="Rhea" id="RHEA:81659"/>
        <dbReference type="Rhea" id="RHEA-COMP:14417"/>
        <dbReference type="Rhea" id="RHEA-COMP:16763"/>
        <dbReference type="ChEBI" id="CHEBI:15378"/>
        <dbReference type="ChEBI" id="CHEBI:57812"/>
        <dbReference type="ChEBI" id="CHEBI:60377"/>
        <dbReference type="ChEBI" id="CHEBI:139598"/>
        <dbReference type="ChEBI" id="CHEBI:156398"/>
    </reaction>
    <physiologicalReaction direction="left-to-right" evidence="8">
        <dbReference type="Rhea" id="RHEA:81660"/>
    </physiologicalReaction>
</comment>
<comment type="biophysicochemical properties">
    <kinetics>
        <KM evidence="2">130 uM for CMP-N-acetylneuraminate</KM>
        <KM evidence="4">104 uM for CMP-N-acetylneuraminate</KM>
        <KM evidence="3">154 uM for CMP-N-acetylneuraminate</KM>
    </kinetics>
</comment>
<comment type="pathway">
    <text evidence="2 4">Protein modification; protein glycosylation.</text>
</comment>
<comment type="subcellular location">
    <subcellularLocation>
        <location evidence="7">Golgi apparatus membrane</location>
        <topology evidence="7">Single-pass type II membrane protein</topology>
    </subcellularLocation>
</comment>
<comment type="tissue specificity">
    <text evidence="2">Expressed in skeletal muscle, heart, kidney, placenta, lung and leukocytes.</text>
</comment>
<comment type="miscellaneous">
    <text>Aberrant O-galactosylation of IgA1 molecules plays a role in the development and progression of IgA nephropathy (IgAN). Genetic interactions of C1GALT1 and ST6GALNAC2 variants influence IgA1 O-glycosylation, disease predisposition, and disease severity, and may contribute to the polygenic nature of IgAN.</text>
</comment>
<comment type="similarity">
    <text evidence="7">Belongs to the glycosyltransferase 29 family.</text>
</comment>
<comment type="online information" name="Functional Glycomics Gateway - GTase">
    <link uri="http://www.functionalglycomics.org/glycomics/molecule/jsp/glycoEnzyme/viewGlycoEnzyme.jsp?gbpId=gt_hum_631"/>
    <text>ST6GalNAc II</text>
</comment>
<accession>Q9UJ37</accession>
<accession>Q12971</accession>
<keyword id="KW-0002">3D-structure</keyword>
<keyword id="KW-1015">Disulfide bond</keyword>
<keyword id="KW-0325">Glycoprotein</keyword>
<keyword id="KW-0328">Glycosyltransferase</keyword>
<keyword id="KW-0333">Golgi apparatus</keyword>
<keyword id="KW-0472">Membrane</keyword>
<keyword id="KW-1267">Proteomics identification</keyword>
<keyword id="KW-1185">Reference proteome</keyword>
<keyword id="KW-0735">Signal-anchor</keyword>
<keyword id="KW-0808">Transferase</keyword>
<keyword id="KW-0812">Transmembrane</keyword>
<keyword id="KW-1133">Transmembrane helix</keyword>